<organism>
    <name type="scientific">Shigella boydii serotype 18 (strain CDC 3083-94 / BS512)</name>
    <dbReference type="NCBI Taxonomy" id="344609"/>
    <lineage>
        <taxon>Bacteria</taxon>
        <taxon>Pseudomonadati</taxon>
        <taxon>Pseudomonadota</taxon>
        <taxon>Gammaproteobacteria</taxon>
        <taxon>Enterobacterales</taxon>
        <taxon>Enterobacteriaceae</taxon>
        <taxon>Shigella</taxon>
    </lineage>
</organism>
<protein>
    <recommendedName>
        <fullName evidence="1">Flap endonuclease Xni</fullName>
        <shortName evidence="1">FEN</shortName>
        <ecNumber evidence="1">3.1.-.-</ecNumber>
    </recommendedName>
</protein>
<accession>B2TZD5</accession>
<gene>
    <name evidence="1" type="primary">xni</name>
    <name evidence="1" type="synonym">ygdG</name>
    <name type="ordered locus">SbBS512_E3074</name>
</gene>
<feature type="chain" id="PRO_1000138396" description="Flap endonuclease Xni">
    <location>
        <begin position="1"/>
        <end position="251"/>
    </location>
</feature>
<feature type="domain" description="5'-3' exonuclease" evidence="1">
    <location>
        <begin position="160"/>
        <end position="249"/>
    </location>
</feature>
<feature type="region of interest" description="Interaction with DNA" evidence="1">
    <location>
        <begin position="184"/>
        <end position="189"/>
    </location>
</feature>
<feature type="binding site" evidence="1">
    <location>
        <position position="104"/>
    </location>
    <ligand>
        <name>Mg(2+)</name>
        <dbReference type="ChEBI" id="CHEBI:18420"/>
    </ligand>
</feature>
<feature type="binding site" evidence="1">
    <location>
        <position position="171"/>
    </location>
    <ligand>
        <name>K(+)</name>
        <dbReference type="ChEBI" id="CHEBI:29103"/>
    </ligand>
</feature>
<feature type="binding site" evidence="1">
    <location>
        <position position="172"/>
    </location>
    <ligand>
        <name>K(+)</name>
        <dbReference type="ChEBI" id="CHEBI:29103"/>
    </ligand>
</feature>
<feature type="binding site" evidence="1">
    <location>
        <position position="180"/>
    </location>
    <ligand>
        <name>K(+)</name>
        <dbReference type="ChEBI" id="CHEBI:29103"/>
    </ligand>
</feature>
<feature type="binding site" evidence="1">
    <location>
        <position position="182"/>
    </location>
    <ligand>
        <name>K(+)</name>
        <dbReference type="ChEBI" id="CHEBI:29103"/>
    </ligand>
</feature>
<feature type="binding site" evidence="1">
    <location>
        <position position="185"/>
    </location>
    <ligand>
        <name>K(+)</name>
        <dbReference type="ChEBI" id="CHEBI:29103"/>
    </ligand>
</feature>
<comment type="function">
    <text evidence="1">Has flap endonuclease activity. During DNA replication, flap endonucleases cleave the 5'-overhanging flap structure that is generated by displacement synthesis when DNA polymerase encounters the 5'-end of a downstream Okazaki fragment.</text>
</comment>
<comment type="cofactor">
    <cofactor evidence="1">
        <name>Mg(2+)</name>
        <dbReference type="ChEBI" id="CHEBI:18420"/>
    </cofactor>
    <text evidence="1">Binds 2 Mg(2+) per subunit. Only one magnesium ion has a direct interaction with the protein, the other interactions are indirect.</text>
</comment>
<comment type="cofactor">
    <cofactor evidence="1">
        <name>K(+)</name>
        <dbReference type="ChEBI" id="CHEBI:29103"/>
    </cofactor>
    <text evidence="1">Binds 1 K(+) per subunit. The potassium ion strongly increases the affinity for DNA.</text>
</comment>
<comment type="similarity">
    <text evidence="1">Belongs to the Xni family.</text>
</comment>
<comment type="sequence caution" evidence="2">
    <conflict type="erroneous initiation">
        <sequence resource="EMBL-CDS" id="ACD07113"/>
    </conflict>
    <text>Extended N-terminus.</text>
</comment>
<name>XNI_SHIB3</name>
<reference key="1">
    <citation type="submission" date="2008-05" db="EMBL/GenBank/DDBJ databases">
        <title>Complete sequence of Shigella boydii serotype 18 strain BS512.</title>
        <authorList>
            <person name="Rasko D.A."/>
            <person name="Rosovitz M."/>
            <person name="Maurelli A.T."/>
            <person name="Myers G."/>
            <person name="Seshadri R."/>
            <person name="Cer R."/>
            <person name="Jiang L."/>
            <person name="Ravel J."/>
            <person name="Sebastian Y."/>
        </authorList>
    </citation>
    <scope>NUCLEOTIDE SEQUENCE [LARGE SCALE GENOMIC DNA]</scope>
    <source>
        <strain>CDC 3083-94 / BS512</strain>
    </source>
</reference>
<evidence type="ECO:0000255" key="1">
    <source>
        <dbReference type="HAMAP-Rule" id="MF_01192"/>
    </source>
</evidence>
<evidence type="ECO:0000305" key="2"/>
<proteinExistence type="inferred from homology"/>
<keyword id="KW-0238">DNA-binding</keyword>
<keyword id="KW-0255">Endonuclease</keyword>
<keyword id="KW-0378">Hydrolase</keyword>
<keyword id="KW-0460">Magnesium</keyword>
<keyword id="KW-0479">Metal-binding</keyword>
<keyword id="KW-0540">Nuclease</keyword>
<keyword id="KW-0630">Potassium</keyword>
<keyword id="KW-1185">Reference proteome</keyword>
<sequence>MAVHLLIVDALNLIRRIHAVQGSPCVETCQHALDQLIMHSQPTHAVAVFDDENRSSGWRHQRLPDYKAGRPPMPEELHDEMPALRAAFEQRGVPCWSTSGNEADDLAATLAVKVTQAGHQATIVSTDKGYCQLLSPTLRIRDYFQKRWLDAPFIDKEFGVQPQQLPDYWGLAGISSSKVPGVAGIGPKSATQLLVEFQSLEGIYENLDAVAEKWRKKLETHKEMAFLCRDIARLQTDLHIDGNLQQLRLVR</sequence>
<dbReference type="EC" id="3.1.-.-" evidence="1"/>
<dbReference type="EMBL" id="CP001063">
    <property type="protein sequence ID" value="ACD07113.1"/>
    <property type="status" value="ALT_INIT"/>
    <property type="molecule type" value="Genomic_DNA"/>
</dbReference>
<dbReference type="RefSeq" id="WP_000268232.1">
    <property type="nucleotide sequence ID" value="NC_010658.1"/>
</dbReference>
<dbReference type="SMR" id="B2TZD5"/>
<dbReference type="STRING" id="344609.SbBS512_E3074"/>
<dbReference type="GeneID" id="93779200"/>
<dbReference type="KEGG" id="sbc:SbBS512_E3074"/>
<dbReference type="HOGENOM" id="CLU_004675_1_2_6"/>
<dbReference type="Proteomes" id="UP000001030">
    <property type="component" value="Chromosome"/>
</dbReference>
<dbReference type="GO" id="GO:0008409">
    <property type="term" value="F:5'-3' exonuclease activity"/>
    <property type="evidence" value="ECO:0007669"/>
    <property type="project" value="InterPro"/>
</dbReference>
<dbReference type="GO" id="GO:0017108">
    <property type="term" value="F:5'-flap endonuclease activity"/>
    <property type="evidence" value="ECO:0007669"/>
    <property type="project" value="UniProtKB-UniRule"/>
</dbReference>
<dbReference type="GO" id="GO:0003677">
    <property type="term" value="F:DNA binding"/>
    <property type="evidence" value="ECO:0007669"/>
    <property type="project" value="UniProtKB-UniRule"/>
</dbReference>
<dbReference type="GO" id="GO:0000287">
    <property type="term" value="F:magnesium ion binding"/>
    <property type="evidence" value="ECO:0007669"/>
    <property type="project" value="UniProtKB-UniRule"/>
</dbReference>
<dbReference type="GO" id="GO:0030955">
    <property type="term" value="F:potassium ion binding"/>
    <property type="evidence" value="ECO:0007669"/>
    <property type="project" value="UniProtKB-UniRule"/>
</dbReference>
<dbReference type="GO" id="GO:0033567">
    <property type="term" value="P:DNA replication, Okazaki fragment processing"/>
    <property type="evidence" value="ECO:0007669"/>
    <property type="project" value="UniProtKB-UniRule"/>
</dbReference>
<dbReference type="CDD" id="cd09898">
    <property type="entry name" value="H3TH_53EXO"/>
    <property type="match status" value="1"/>
</dbReference>
<dbReference type="CDD" id="cd09859">
    <property type="entry name" value="PIN_53EXO"/>
    <property type="match status" value="1"/>
</dbReference>
<dbReference type="FunFam" id="1.10.150.20:FF:000003">
    <property type="entry name" value="DNA polymerase I"/>
    <property type="match status" value="1"/>
</dbReference>
<dbReference type="FunFam" id="3.40.50.1010:FF:000011">
    <property type="entry name" value="Flap endonuclease Xni"/>
    <property type="match status" value="1"/>
</dbReference>
<dbReference type="Gene3D" id="1.10.150.20">
    <property type="entry name" value="5' to 3' exonuclease, C-terminal subdomain"/>
    <property type="match status" value="1"/>
</dbReference>
<dbReference type="Gene3D" id="3.40.50.1010">
    <property type="entry name" value="5'-nuclease"/>
    <property type="match status" value="1"/>
</dbReference>
<dbReference type="HAMAP" id="MF_01192">
    <property type="entry name" value="Xni"/>
    <property type="match status" value="1"/>
</dbReference>
<dbReference type="InterPro" id="IPR020046">
    <property type="entry name" value="5-3_exonucl_a-hlix_arch_N"/>
</dbReference>
<dbReference type="InterPro" id="IPR002421">
    <property type="entry name" value="5-3_exonuclease"/>
</dbReference>
<dbReference type="InterPro" id="IPR036279">
    <property type="entry name" value="5-3_exonuclease_C_sf"/>
</dbReference>
<dbReference type="InterPro" id="IPR020045">
    <property type="entry name" value="DNA_polI_H3TH"/>
</dbReference>
<dbReference type="InterPro" id="IPR038969">
    <property type="entry name" value="FEN"/>
</dbReference>
<dbReference type="InterPro" id="IPR008918">
    <property type="entry name" value="HhH2"/>
</dbReference>
<dbReference type="InterPro" id="IPR029060">
    <property type="entry name" value="PIN-like_dom_sf"/>
</dbReference>
<dbReference type="InterPro" id="IPR022895">
    <property type="entry name" value="Xni"/>
</dbReference>
<dbReference type="NCBIfam" id="NF007017">
    <property type="entry name" value="PRK09482.1"/>
    <property type="match status" value="1"/>
</dbReference>
<dbReference type="PANTHER" id="PTHR42646:SF2">
    <property type="entry name" value="5'-3' EXONUCLEASE FAMILY PROTEIN"/>
    <property type="match status" value="1"/>
</dbReference>
<dbReference type="PANTHER" id="PTHR42646">
    <property type="entry name" value="FLAP ENDONUCLEASE XNI"/>
    <property type="match status" value="1"/>
</dbReference>
<dbReference type="Pfam" id="PF01367">
    <property type="entry name" value="5_3_exonuc"/>
    <property type="match status" value="1"/>
</dbReference>
<dbReference type="Pfam" id="PF02739">
    <property type="entry name" value="5_3_exonuc_N"/>
    <property type="match status" value="1"/>
</dbReference>
<dbReference type="SMART" id="SM00475">
    <property type="entry name" value="53EXOc"/>
    <property type="match status" value="1"/>
</dbReference>
<dbReference type="SMART" id="SM00279">
    <property type="entry name" value="HhH2"/>
    <property type="match status" value="1"/>
</dbReference>
<dbReference type="SUPFAM" id="SSF47807">
    <property type="entry name" value="5' to 3' exonuclease, C-terminal subdomain"/>
    <property type="match status" value="1"/>
</dbReference>
<dbReference type="SUPFAM" id="SSF88723">
    <property type="entry name" value="PIN domain-like"/>
    <property type="match status" value="1"/>
</dbReference>